<keyword id="KW-0025">Alternative splicing</keyword>
<keyword id="KW-0217">Developmental protein</keyword>
<keyword id="KW-0221">Differentiation</keyword>
<keyword id="KW-0539">Nucleus</keyword>
<keyword id="KW-0597">Phosphoprotein</keyword>
<keyword id="KW-1185">Reference proteome</keyword>
<keyword id="KW-0677">Repeat</keyword>
<keyword id="KW-0744">Spermatogenesis</keyword>
<proteinExistence type="evidence at protein level"/>
<accession>Q5XHX8</accession>
<protein>
    <recommendedName>
        <fullName evidence="2">Sperm microtubule associated protein 2</fullName>
    </recommendedName>
    <alternativeName>
        <fullName evidence="1">Testicular haploid expressed gene protein</fullName>
    </alternativeName>
</protein>
<name>SMAP2_RAT</name>
<reference key="1">
    <citation type="journal article" date="2004" name="Nature">
        <title>Genome sequence of the Brown Norway rat yields insights into mammalian evolution.</title>
        <authorList>
            <person name="Gibbs R.A."/>
            <person name="Weinstock G.M."/>
            <person name="Metzker M.L."/>
            <person name="Muzny D.M."/>
            <person name="Sodergren E.J."/>
            <person name="Scherer S."/>
            <person name="Scott G."/>
            <person name="Steffen D."/>
            <person name="Worley K.C."/>
            <person name="Burch P.E."/>
            <person name="Okwuonu G."/>
            <person name="Hines S."/>
            <person name="Lewis L."/>
            <person name="Deramo C."/>
            <person name="Delgado O."/>
            <person name="Dugan-Rocha S."/>
            <person name="Miner G."/>
            <person name="Morgan M."/>
            <person name="Hawes A."/>
            <person name="Gill R."/>
            <person name="Holt R.A."/>
            <person name="Adams M.D."/>
            <person name="Amanatides P.G."/>
            <person name="Baden-Tillson H."/>
            <person name="Barnstead M."/>
            <person name="Chin S."/>
            <person name="Evans C.A."/>
            <person name="Ferriera S."/>
            <person name="Fosler C."/>
            <person name="Glodek A."/>
            <person name="Gu Z."/>
            <person name="Jennings D."/>
            <person name="Kraft C.L."/>
            <person name="Nguyen T."/>
            <person name="Pfannkoch C.M."/>
            <person name="Sitter C."/>
            <person name="Sutton G.G."/>
            <person name="Venter J.C."/>
            <person name="Woodage T."/>
            <person name="Smith D."/>
            <person name="Lee H.-M."/>
            <person name="Gustafson E."/>
            <person name="Cahill P."/>
            <person name="Kana A."/>
            <person name="Doucette-Stamm L."/>
            <person name="Weinstock K."/>
            <person name="Fechtel K."/>
            <person name="Weiss R.B."/>
            <person name="Dunn D.M."/>
            <person name="Green E.D."/>
            <person name="Blakesley R.W."/>
            <person name="Bouffard G.G."/>
            <person name="De Jong P.J."/>
            <person name="Osoegawa K."/>
            <person name="Zhu B."/>
            <person name="Marra M."/>
            <person name="Schein J."/>
            <person name="Bosdet I."/>
            <person name="Fjell C."/>
            <person name="Jones S."/>
            <person name="Krzywinski M."/>
            <person name="Mathewson C."/>
            <person name="Siddiqui A."/>
            <person name="Wye N."/>
            <person name="McPherson J."/>
            <person name="Zhao S."/>
            <person name="Fraser C.M."/>
            <person name="Shetty J."/>
            <person name="Shatsman S."/>
            <person name="Geer K."/>
            <person name="Chen Y."/>
            <person name="Abramzon S."/>
            <person name="Nierman W.C."/>
            <person name="Havlak P.H."/>
            <person name="Chen R."/>
            <person name="Durbin K.J."/>
            <person name="Egan A."/>
            <person name="Ren Y."/>
            <person name="Song X.-Z."/>
            <person name="Li B."/>
            <person name="Liu Y."/>
            <person name="Qin X."/>
            <person name="Cawley S."/>
            <person name="Cooney A.J."/>
            <person name="D'Souza L.M."/>
            <person name="Martin K."/>
            <person name="Wu J.Q."/>
            <person name="Gonzalez-Garay M.L."/>
            <person name="Jackson A.R."/>
            <person name="Kalafus K.J."/>
            <person name="McLeod M.P."/>
            <person name="Milosavljevic A."/>
            <person name="Virk D."/>
            <person name="Volkov A."/>
            <person name="Wheeler D.A."/>
            <person name="Zhang Z."/>
            <person name="Bailey J.A."/>
            <person name="Eichler E.E."/>
            <person name="Tuzun E."/>
            <person name="Birney E."/>
            <person name="Mongin E."/>
            <person name="Ureta-Vidal A."/>
            <person name="Woodwark C."/>
            <person name="Zdobnov E."/>
            <person name="Bork P."/>
            <person name="Suyama M."/>
            <person name="Torrents D."/>
            <person name="Alexandersson M."/>
            <person name="Trask B.J."/>
            <person name="Young J.M."/>
            <person name="Huang H."/>
            <person name="Wang H."/>
            <person name="Xing H."/>
            <person name="Daniels S."/>
            <person name="Gietzen D."/>
            <person name="Schmidt J."/>
            <person name="Stevens K."/>
            <person name="Vitt U."/>
            <person name="Wingrove J."/>
            <person name="Camara F."/>
            <person name="Mar Alba M."/>
            <person name="Abril J.F."/>
            <person name="Guigo R."/>
            <person name="Smit A."/>
            <person name="Dubchak I."/>
            <person name="Rubin E.M."/>
            <person name="Couronne O."/>
            <person name="Poliakov A."/>
            <person name="Huebner N."/>
            <person name="Ganten D."/>
            <person name="Goesele C."/>
            <person name="Hummel O."/>
            <person name="Kreitler T."/>
            <person name="Lee Y.-A."/>
            <person name="Monti J."/>
            <person name="Schulz H."/>
            <person name="Zimdahl H."/>
            <person name="Himmelbauer H."/>
            <person name="Lehrach H."/>
            <person name="Jacob H.J."/>
            <person name="Bromberg S."/>
            <person name="Gullings-Handley J."/>
            <person name="Jensen-Seaman M.I."/>
            <person name="Kwitek A.E."/>
            <person name="Lazar J."/>
            <person name="Pasko D."/>
            <person name="Tonellato P.J."/>
            <person name="Twigger S."/>
            <person name="Ponting C.P."/>
            <person name="Duarte J.M."/>
            <person name="Rice S."/>
            <person name="Goodstadt L."/>
            <person name="Beatson S.A."/>
            <person name="Emes R.D."/>
            <person name="Winter E.E."/>
            <person name="Webber C."/>
            <person name="Brandt P."/>
            <person name="Nyakatura G."/>
            <person name="Adetobi M."/>
            <person name="Chiaromonte F."/>
            <person name="Elnitski L."/>
            <person name="Eswara P."/>
            <person name="Hardison R.C."/>
            <person name="Hou M."/>
            <person name="Kolbe D."/>
            <person name="Makova K."/>
            <person name="Miller W."/>
            <person name="Nekrutenko A."/>
            <person name="Riemer C."/>
            <person name="Schwartz S."/>
            <person name="Taylor J."/>
            <person name="Yang S."/>
            <person name="Zhang Y."/>
            <person name="Lindpaintner K."/>
            <person name="Andrews T.D."/>
            <person name="Caccamo M."/>
            <person name="Clamp M."/>
            <person name="Clarke L."/>
            <person name="Curwen V."/>
            <person name="Durbin R.M."/>
            <person name="Eyras E."/>
            <person name="Searle S.M."/>
            <person name="Cooper G.M."/>
            <person name="Batzoglou S."/>
            <person name="Brudno M."/>
            <person name="Sidow A."/>
            <person name="Stone E.A."/>
            <person name="Payseur B.A."/>
            <person name="Bourque G."/>
            <person name="Lopez-Otin C."/>
            <person name="Puente X.S."/>
            <person name="Chakrabarti K."/>
            <person name="Chatterji S."/>
            <person name="Dewey C."/>
            <person name="Pachter L."/>
            <person name="Bray N."/>
            <person name="Yap V.B."/>
            <person name="Caspi A."/>
            <person name="Tesler G."/>
            <person name="Pevzner P.A."/>
            <person name="Haussler D."/>
            <person name="Roskin K.M."/>
            <person name="Baertsch R."/>
            <person name="Clawson H."/>
            <person name="Furey T.S."/>
            <person name="Hinrichs A.S."/>
            <person name="Karolchik D."/>
            <person name="Kent W.J."/>
            <person name="Rosenbloom K.R."/>
            <person name="Trumbower H."/>
            <person name="Weirauch M."/>
            <person name="Cooper D.N."/>
            <person name="Stenson P.D."/>
            <person name="Ma B."/>
            <person name="Brent M."/>
            <person name="Arumugam M."/>
            <person name="Shteynberg D."/>
            <person name="Copley R.R."/>
            <person name="Taylor M.S."/>
            <person name="Riethman H."/>
            <person name="Mudunuri U."/>
            <person name="Peterson J."/>
            <person name="Guyer M."/>
            <person name="Felsenfeld A."/>
            <person name="Old S."/>
            <person name="Mockrin S."/>
            <person name="Collins F.S."/>
        </authorList>
    </citation>
    <scope>NUCLEOTIDE SEQUENCE [LARGE SCALE GENOMIC DNA]</scope>
    <source>
        <strain>Brown Norway</strain>
    </source>
</reference>
<reference key="2">
    <citation type="journal article" date="2004" name="Genome Res.">
        <title>The status, quality, and expansion of the NIH full-length cDNA project: the Mammalian Gene Collection (MGC).</title>
        <authorList>
            <consortium name="The MGC Project Team"/>
        </authorList>
    </citation>
    <scope>NUCLEOTIDE SEQUENCE [LARGE SCALE MRNA] (ISOFORM 2)</scope>
    <source>
        <tissue>Testis</tissue>
    </source>
</reference>
<reference key="3">
    <citation type="journal article" date="2012" name="Nat. Commun.">
        <title>Quantitative maps of protein phosphorylation sites across 14 different rat organs and tissues.</title>
        <authorList>
            <person name="Lundby A."/>
            <person name="Secher A."/>
            <person name="Lage K."/>
            <person name="Nordsborg N.B."/>
            <person name="Dmytriyev A."/>
            <person name="Lundby C."/>
            <person name="Olsen J.V."/>
        </authorList>
    </citation>
    <scope>PHOSPHORYLATION [LARGE SCALE ANALYSIS] AT SER-290</scope>
    <scope>IDENTIFICATION BY MASS SPECTROMETRY [LARGE SCALE ANALYSIS]</scope>
</reference>
<gene>
    <name evidence="2" type="primary">Spmap2</name>
    <name evidence="1" type="synonym">Theg</name>
</gene>
<sequence>MGELGEHRSRSSLLSIPVLDTKTSGGSEYRESDGSLDLQSTLFEDHWLQSSQATTERNTDDPEEEIPPEEMVGEELPEVSNLEDSLRRDLEVEVVGMSHLSINERTTPTTSSAKCRKKKNHRLLELAKPKFNWQCLKDRTGRCCKGHVWISPRKTNLQFCLYWPSVYWTERFIEDTTLTITVPEVSRRVEELSRPKRFYQEYYNNNRTTPIWPIPRSTLEYQASNRLKRLATPKIRNNIWSINMSEVSQVSRAAQMAVPTPRTLRLAKPRAPATLLEEWDPMPKPKPYVSDYNRLLQLATPKALSEKCVPDRSPQWEVLNVTKNAVASSRIISLAQPKIRKDLNEGYNPYYISPASLVAQASPRIYELAVPKHITKKV</sequence>
<organism>
    <name type="scientific">Rattus norvegicus</name>
    <name type="common">Rat</name>
    <dbReference type="NCBI Taxonomy" id="10116"/>
    <lineage>
        <taxon>Eukaryota</taxon>
        <taxon>Metazoa</taxon>
        <taxon>Chordata</taxon>
        <taxon>Craniata</taxon>
        <taxon>Vertebrata</taxon>
        <taxon>Euteleostomi</taxon>
        <taxon>Mammalia</taxon>
        <taxon>Eutheria</taxon>
        <taxon>Euarchontoglires</taxon>
        <taxon>Glires</taxon>
        <taxon>Rodentia</taxon>
        <taxon>Myomorpha</taxon>
        <taxon>Muroidea</taxon>
        <taxon>Muridae</taxon>
        <taxon>Murinae</taxon>
        <taxon>Rattus</taxon>
    </lineage>
</organism>
<comment type="function">
    <text evidence="1">May be involved (but not essential) in spermatogenesis.</text>
</comment>
<comment type="subunit">
    <text evidence="1">Interacts with CCT5.</text>
</comment>
<comment type="subcellular location">
    <subcellularLocation>
        <location evidence="1">Nucleus</location>
    </subcellularLocation>
    <text evidence="1">Localized predominantly in the nucleus of haploid round spermatid.</text>
</comment>
<comment type="alternative products">
    <event type="alternative splicing"/>
    <isoform>
        <id>Q5XHX8-1</id>
        <name>1</name>
        <sequence type="displayed"/>
    </isoform>
    <isoform>
        <id>Q5XHX8-2</id>
        <name>2</name>
        <sequence type="described" ref="VSP_028448"/>
    </isoform>
</comment>
<evidence type="ECO:0000250" key="1">
    <source>
        <dbReference type="UniProtKB" id="Q9JMB1"/>
    </source>
</evidence>
<evidence type="ECO:0000250" key="2">
    <source>
        <dbReference type="UniProtKB" id="Q9P2T0"/>
    </source>
</evidence>
<evidence type="ECO:0000256" key="3">
    <source>
        <dbReference type="SAM" id="MobiDB-lite"/>
    </source>
</evidence>
<evidence type="ECO:0000303" key="4">
    <source>
    </source>
</evidence>
<evidence type="ECO:0007744" key="5">
    <source>
    </source>
</evidence>
<dbReference type="EMBL" id="AABR03056546">
    <property type="status" value="NOT_ANNOTATED_CDS"/>
    <property type="molecule type" value="Genomic_DNA"/>
</dbReference>
<dbReference type="EMBL" id="BC083921">
    <property type="protein sequence ID" value="AAH83921.1"/>
    <property type="molecule type" value="mRNA"/>
</dbReference>
<dbReference type="RefSeq" id="NP_001013120.1">
    <molecule id="Q5XHX8-2"/>
    <property type="nucleotide sequence ID" value="NM_001013102.2"/>
</dbReference>
<dbReference type="RefSeq" id="NP_001417194.1">
    <molecule id="Q5XHX8-1"/>
    <property type="nucleotide sequence ID" value="NM_001430265.1"/>
</dbReference>
<dbReference type="RefSeq" id="XP_006240919.1">
    <property type="nucleotide sequence ID" value="XM_006240857.2"/>
</dbReference>
<dbReference type="SMR" id="Q5XHX8"/>
<dbReference type="FunCoup" id="Q5XHX8">
    <property type="interactions" value="7"/>
</dbReference>
<dbReference type="STRING" id="10116.ENSRNOP00000010549"/>
<dbReference type="iPTMnet" id="Q5XHX8"/>
<dbReference type="PhosphoSitePlus" id="Q5XHX8"/>
<dbReference type="PaxDb" id="10116-ENSRNOP00000010549"/>
<dbReference type="Ensembl" id="ENSRNOT00000010549.8">
    <molecule id="Q5XHX8-1"/>
    <property type="protein sequence ID" value="ENSRNOP00000010549.4"/>
    <property type="gene ID" value="ENSRNOG00000007960.9"/>
</dbReference>
<dbReference type="Ensembl" id="ENSRNOT00000042792.5">
    <molecule id="Q5XHX8-2"/>
    <property type="protein sequence ID" value="ENSRNOP00000044536.2"/>
    <property type="gene ID" value="ENSRNOG00000007960.9"/>
</dbReference>
<dbReference type="GeneID" id="299599"/>
<dbReference type="KEGG" id="rno:299599"/>
<dbReference type="UCSC" id="RGD:1309240">
    <molecule id="Q5XHX8-1"/>
    <property type="organism name" value="rat"/>
</dbReference>
<dbReference type="AGR" id="RGD:1309240"/>
<dbReference type="CTD" id="51298"/>
<dbReference type="RGD" id="1309240">
    <property type="gene designation" value="Spmap2"/>
</dbReference>
<dbReference type="eggNOG" id="ENOG502SBEN">
    <property type="taxonomic scope" value="Eukaryota"/>
</dbReference>
<dbReference type="GeneTree" id="ENSGT00940000154630"/>
<dbReference type="HOGENOM" id="CLU_061711_0_0_1"/>
<dbReference type="InParanoid" id="Q5XHX8"/>
<dbReference type="OrthoDB" id="25466at2759"/>
<dbReference type="PhylomeDB" id="Q5XHX8"/>
<dbReference type="TreeFam" id="TF329290"/>
<dbReference type="PRO" id="PR:Q5XHX8"/>
<dbReference type="Proteomes" id="UP000002494">
    <property type="component" value="Chromosome 7"/>
</dbReference>
<dbReference type="Bgee" id="ENSRNOG00000007960">
    <property type="expression patterns" value="Expressed in testis and 2 other cell types or tissues"/>
</dbReference>
<dbReference type="GO" id="GO:0005634">
    <property type="term" value="C:nucleus"/>
    <property type="evidence" value="ECO:0007669"/>
    <property type="project" value="UniProtKB-SubCell"/>
</dbReference>
<dbReference type="GO" id="GO:0030154">
    <property type="term" value="P:cell differentiation"/>
    <property type="evidence" value="ECO:0007669"/>
    <property type="project" value="UniProtKB-KW"/>
</dbReference>
<dbReference type="GO" id="GO:0007283">
    <property type="term" value="P:spermatogenesis"/>
    <property type="evidence" value="ECO:0000266"/>
    <property type="project" value="RGD"/>
</dbReference>
<dbReference type="InterPro" id="IPR042401">
    <property type="entry name" value="SPMAP2-like"/>
</dbReference>
<dbReference type="InterPro" id="IPR006623">
    <property type="entry name" value="THEG"/>
</dbReference>
<dbReference type="PANTHER" id="PTHR15901">
    <property type="entry name" value="TESTICULAR HAPLOID EXPRESSED GENE PROTEIN"/>
    <property type="match status" value="1"/>
</dbReference>
<dbReference type="PANTHER" id="PTHR15901:SF16">
    <property type="entry name" value="TESTICULAR HAPLOID EXPRESSED GENE PROTEIN"/>
    <property type="match status" value="1"/>
</dbReference>
<dbReference type="Pfam" id="PF14912">
    <property type="entry name" value="THEG"/>
    <property type="match status" value="4"/>
</dbReference>
<dbReference type="SMART" id="SM00705">
    <property type="entry name" value="THEG"/>
    <property type="match status" value="7"/>
</dbReference>
<feature type="chain" id="PRO_0000306269" description="Sperm microtubule associated protein 2">
    <location>
        <begin position="1"/>
        <end position="378"/>
    </location>
</feature>
<feature type="repeat" description="THEG 1">
    <location>
        <begin position="113"/>
        <end position="132"/>
    </location>
</feature>
<feature type="repeat" description="THEG 2">
    <location>
        <begin position="179"/>
        <end position="198"/>
    </location>
</feature>
<feature type="repeat" description="THEG 3">
    <location>
        <begin position="217"/>
        <end position="236"/>
    </location>
</feature>
<feature type="repeat" description="THEG 4">
    <location>
        <begin position="253"/>
        <end position="272"/>
    </location>
</feature>
<feature type="repeat" description="THEG 5">
    <location>
        <begin position="285"/>
        <end position="304"/>
    </location>
</feature>
<feature type="repeat" description="THEG 6">
    <location>
        <begin position="321"/>
        <end position="340"/>
    </location>
</feature>
<feature type="repeat" description="THEG 7">
    <location>
        <begin position="355"/>
        <end position="374"/>
    </location>
</feature>
<feature type="region of interest" description="Disordered" evidence="3">
    <location>
        <begin position="1"/>
        <end position="35"/>
    </location>
</feature>
<feature type="region of interest" description="Disordered" evidence="3">
    <location>
        <begin position="47"/>
        <end position="79"/>
    </location>
</feature>
<feature type="compositionally biased region" description="Polar residues" evidence="3">
    <location>
        <begin position="47"/>
        <end position="56"/>
    </location>
</feature>
<feature type="compositionally biased region" description="Acidic residues" evidence="3">
    <location>
        <begin position="61"/>
        <end position="77"/>
    </location>
</feature>
<feature type="modified residue" description="Phosphoserine" evidence="5">
    <location>
        <position position="290"/>
    </location>
</feature>
<feature type="splice variant" id="VSP_028448" description="In isoform 2." evidence="4">
    <original>TPKALSEKCVPDRSPQWEVLNVTKNAVASSRIISLAQPKIRKDLNEGYNPYYISPASLVAQASPRIYELAVPKHITKKV</original>
    <variation>KLKHPDVGARQTAQRVRALAALPEDRGSIPPSTHTAAHNRQ</variation>
    <location>
        <begin position="300"/>
        <end position="378"/>
    </location>
</feature>